<evidence type="ECO:0000250" key="1"/>
<evidence type="ECO:0000255" key="2">
    <source>
        <dbReference type="PROSITE-ProRule" id="PRU00243"/>
    </source>
</evidence>
<evidence type="ECO:0000256" key="3">
    <source>
        <dbReference type="SAM" id="MobiDB-lite"/>
    </source>
</evidence>
<sequence>MKLWKRAAVVLKDGPSLIAADDILTAAVVKATSHDELSIDTESAQFIYRHVLSSPSSLKPLVSLISSRVKRTRSWAVALKGLMLMHGFFLCKSTVAESIGRLPFDLSSFGEGNSRIMSKSGGFNLFVRAYFAFLDRRSILFHDGNRHRYNEESSVLIRLVIIRKMQIIVDSLIRIKPIGENMMIPVINEAMENVVSEIMEIYGWICRRIAEVLPNVHSKIGKTEADLALKIVAKSMKQGGELKKYFEFCKDLGVSNAQEIPNFVRIPEADVIHLDELVRTAMESSEESAERTEIAEEEEEEEEEIETKLSDLITLDHNEEAPASPPRVVVVDIPDLISF</sequence>
<keyword id="KW-0168">Coated pit</keyword>
<keyword id="KW-0968">Cytoplasmic vesicle</keyword>
<keyword id="KW-0254">Endocytosis</keyword>
<keyword id="KW-0333">Golgi apparatus</keyword>
<keyword id="KW-0472">Membrane</keyword>
<keyword id="KW-1185">Reference proteome</keyword>
<accession>Q9LQW4</accession>
<dbReference type="EMBL" id="AC006917">
    <property type="protein sequence ID" value="AAF79250.1"/>
    <property type="molecule type" value="Genomic_DNA"/>
</dbReference>
<dbReference type="EMBL" id="CP002684">
    <property type="protein sequence ID" value="AEE29205.1"/>
    <property type="molecule type" value="Genomic_DNA"/>
</dbReference>
<dbReference type="PIR" id="B86281">
    <property type="entry name" value="B86281"/>
</dbReference>
<dbReference type="RefSeq" id="NP_683306.1">
    <property type="nucleotide sequence ID" value="NM_148465.2"/>
</dbReference>
<dbReference type="SMR" id="Q9LQW4"/>
<dbReference type="STRING" id="3702.Q9LQW4"/>
<dbReference type="PaxDb" id="3702-AT1G14686.1"/>
<dbReference type="ProteomicsDB" id="239149"/>
<dbReference type="EnsemblPlants" id="AT1G14686.1">
    <property type="protein sequence ID" value="AT1G14686.1"/>
    <property type="gene ID" value="AT1G14686"/>
</dbReference>
<dbReference type="GeneID" id="838032"/>
<dbReference type="Gramene" id="AT1G14686.1">
    <property type="protein sequence ID" value="AT1G14686.1"/>
    <property type="gene ID" value="AT1G14686"/>
</dbReference>
<dbReference type="KEGG" id="ath:AT1G14686"/>
<dbReference type="Araport" id="AT1G14686"/>
<dbReference type="TAIR" id="AT1G14686">
    <property type="gene designation" value="PICALM9D"/>
</dbReference>
<dbReference type="eggNOG" id="KOG0251">
    <property type="taxonomic scope" value="Eukaryota"/>
</dbReference>
<dbReference type="HOGENOM" id="CLU_057422_1_0_1"/>
<dbReference type="InParanoid" id="Q9LQW4"/>
<dbReference type="OMA" id="MHGFFLC"/>
<dbReference type="OrthoDB" id="1092509at2759"/>
<dbReference type="PhylomeDB" id="Q9LQW4"/>
<dbReference type="PRO" id="PR:Q9LQW4"/>
<dbReference type="Proteomes" id="UP000006548">
    <property type="component" value="Chromosome 1"/>
</dbReference>
<dbReference type="ExpressionAtlas" id="Q9LQW4">
    <property type="expression patterns" value="baseline and differential"/>
</dbReference>
<dbReference type="GO" id="GO:0005905">
    <property type="term" value="C:clathrin-coated pit"/>
    <property type="evidence" value="ECO:0007669"/>
    <property type="project" value="UniProtKB-SubCell"/>
</dbReference>
<dbReference type="GO" id="GO:0030136">
    <property type="term" value="C:clathrin-coated vesicle"/>
    <property type="evidence" value="ECO:0007669"/>
    <property type="project" value="UniProtKB-SubCell"/>
</dbReference>
<dbReference type="GO" id="GO:0005794">
    <property type="term" value="C:Golgi apparatus"/>
    <property type="evidence" value="ECO:0007669"/>
    <property type="project" value="UniProtKB-SubCell"/>
</dbReference>
<dbReference type="GO" id="GO:0005545">
    <property type="term" value="F:1-phosphatidylinositol binding"/>
    <property type="evidence" value="ECO:0007669"/>
    <property type="project" value="InterPro"/>
</dbReference>
<dbReference type="GO" id="GO:0030276">
    <property type="term" value="F:clathrin binding"/>
    <property type="evidence" value="ECO:0007669"/>
    <property type="project" value="InterPro"/>
</dbReference>
<dbReference type="GO" id="GO:0048268">
    <property type="term" value="P:clathrin coat assembly"/>
    <property type="evidence" value="ECO:0007669"/>
    <property type="project" value="InterPro"/>
</dbReference>
<dbReference type="GO" id="GO:0072583">
    <property type="term" value="P:clathrin-dependent endocytosis"/>
    <property type="evidence" value="ECO:0007669"/>
    <property type="project" value="InterPro"/>
</dbReference>
<dbReference type="CDD" id="cd16987">
    <property type="entry name" value="ANTH_N_AP180_plant"/>
    <property type="match status" value="1"/>
</dbReference>
<dbReference type="FunFam" id="1.25.40.90:FF:000027">
    <property type="entry name" value="Putative clathrin assembly protein"/>
    <property type="match status" value="1"/>
</dbReference>
<dbReference type="Gene3D" id="1.25.40.90">
    <property type="match status" value="1"/>
</dbReference>
<dbReference type="Gene3D" id="1.20.58.150">
    <property type="entry name" value="ANTH domain"/>
    <property type="match status" value="1"/>
</dbReference>
<dbReference type="InterPro" id="IPR011417">
    <property type="entry name" value="ANTH_dom"/>
</dbReference>
<dbReference type="InterPro" id="IPR014712">
    <property type="entry name" value="ANTH_dom_sf"/>
</dbReference>
<dbReference type="InterPro" id="IPR048050">
    <property type="entry name" value="ANTH_N_plant"/>
</dbReference>
<dbReference type="InterPro" id="IPR045192">
    <property type="entry name" value="AP180-like"/>
</dbReference>
<dbReference type="InterPro" id="IPR013809">
    <property type="entry name" value="ENTH"/>
</dbReference>
<dbReference type="InterPro" id="IPR008942">
    <property type="entry name" value="ENTH_VHS"/>
</dbReference>
<dbReference type="PANTHER" id="PTHR22951">
    <property type="entry name" value="CLATHRIN ASSEMBLY PROTEIN"/>
    <property type="match status" value="1"/>
</dbReference>
<dbReference type="PANTHER" id="PTHR22951:SF78">
    <property type="entry name" value="ENTH DOMAIN-CONTAINING PROTEIN"/>
    <property type="match status" value="1"/>
</dbReference>
<dbReference type="Pfam" id="PF07651">
    <property type="entry name" value="ANTH"/>
    <property type="match status" value="1"/>
</dbReference>
<dbReference type="SUPFAM" id="SSF48464">
    <property type="entry name" value="ENTH/VHS domain"/>
    <property type="match status" value="1"/>
</dbReference>
<dbReference type="SUPFAM" id="SSF89009">
    <property type="entry name" value="GAT-like domain"/>
    <property type="match status" value="1"/>
</dbReference>
<dbReference type="PROSITE" id="PS50942">
    <property type="entry name" value="ENTH"/>
    <property type="match status" value="1"/>
</dbReference>
<name>CAP15_ARATH</name>
<organism>
    <name type="scientific">Arabidopsis thaliana</name>
    <name type="common">Mouse-ear cress</name>
    <dbReference type="NCBI Taxonomy" id="3702"/>
    <lineage>
        <taxon>Eukaryota</taxon>
        <taxon>Viridiplantae</taxon>
        <taxon>Streptophyta</taxon>
        <taxon>Embryophyta</taxon>
        <taxon>Tracheophyta</taxon>
        <taxon>Spermatophyta</taxon>
        <taxon>Magnoliopsida</taxon>
        <taxon>eudicotyledons</taxon>
        <taxon>Gunneridae</taxon>
        <taxon>Pentapetalae</taxon>
        <taxon>rosids</taxon>
        <taxon>malvids</taxon>
        <taxon>Brassicales</taxon>
        <taxon>Brassicaceae</taxon>
        <taxon>Camelineae</taxon>
        <taxon>Arabidopsis</taxon>
    </lineage>
</organism>
<gene>
    <name type="ordered locus">At1g14686</name>
    <name type="ORF">F10B6.6</name>
</gene>
<protein>
    <recommendedName>
        <fullName>Putative clathrin assembly protein At1g14686</fullName>
    </recommendedName>
</protein>
<proteinExistence type="inferred from homology"/>
<feature type="chain" id="PRO_0000187081" description="Putative clathrin assembly protein At1g14686">
    <location>
        <begin position="1"/>
        <end position="339"/>
    </location>
</feature>
<feature type="domain" description="ENTH" evidence="2">
    <location>
        <begin position="16"/>
        <end position="148"/>
    </location>
</feature>
<feature type="region of interest" description="Disordered" evidence="3">
    <location>
        <begin position="283"/>
        <end position="307"/>
    </location>
</feature>
<feature type="compositionally biased region" description="Acidic residues" evidence="3">
    <location>
        <begin position="295"/>
        <end position="305"/>
    </location>
</feature>
<comment type="subcellular location">
    <subcellularLocation>
        <location evidence="1">Membrane</location>
        <location evidence="1">Clathrin-coated pit</location>
    </subcellularLocation>
    <subcellularLocation>
        <location evidence="1">Golgi apparatus</location>
    </subcellularLocation>
    <subcellularLocation>
        <location evidence="1">Cytoplasmic vesicle</location>
        <location evidence="1">Clathrin-coated vesicle</location>
    </subcellularLocation>
    <text evidence="1">Colocalized with clathrin in the Golgi area.</text>
</comment>
<reference key="1">
    <citation type="journal article" date="2000" name="Nature">
        <title>Sequence and analysis of chromosome 1 of the plant Arabidopsis thaliana.</title>
        <authorList>
            <person name="Theologis A."/>
            <person name="Ecker J.R."/>
            <person name="Palm C.J."/>
            <person name="Federspiel N.A."/>
            <person name="Kaul S."/>
            <person name="White O."/>
            <person name="Alonso J."/>
            <person name="Altafi H."/>
            <person name="Araujo R."/>
            <person name="Bowman C.L."/>
            <person name="Brooks S.Y."/>
            <person name="Buehler E."/>
            <person name="Chan A."/>
            <person name="Chao Q."/>
            <person name="Chen H."/>
            <person name="Cheuk R.F."/>
            <person name="Chin C.W."/>
            <person name="Chung M.K."/>
            <person name="Conn L."/>
            <person name="Conway A.B."/>
            <person name="Conway A.R."/>
            <person name="Creasy T.H."/>
            <person name="Dewar K."/>
            <person name="Dunn P."/>
            <person name="Etgu P."/>
            <person name="Feldblyum T.V."/>
            <person name="Feng J.-D."/>
            <person name="Fong B."/>
            <person name="Fujii C.Y."/>
            <person name="Gill J.E."/>
            <person name="Goldsmith A.D."/>
            <person name="Haas B."/>
            <person name="Hansen N.F."/>
            <person name="Hughes B."/>
            <person name="Huizar L."/>
            <person name="Hunter J.L."/>
            <person name="Jenkins J."/>
            <person name="Johnson-Hopson C."/>
            <person name="Khan S."/>
            <person name="Khaykin E."/>
            <person name="Kim C.J."/>
            <person name="Koo H.L."/>
            <person name="Kremenetskaia I."/>
            <person name="Kurtz D.B."/>
            <person name="Kwan A."/>
            <person name="Lam B."/>
            <person name="Langin-Hooper S."/>
            <person name="Lee A."/>
            <person name="Lee J.M."/>
            <person name="Lenz C.A."/>
            <person name="Li J.H."/>
            <person name="Li Y.-P."/>
            <person name="Lin X."/>
            <person name="Liu S.X."/>
            <person name="Liu Z.A."/>
            <person name="Luros J.S."/>
            <person name="Maiti R."/>
            <person name="Marziali A."/>
            <person name="Militscher J."/>
            <person name="Miranda M."/>
            <person name="Nguyen M."/>
            <person name="Nierman W.C."/>
            <person name="Osborne B.I."/>
            <person name="Pai G."/>
            <person name="Peterson J."/>
            <person name="Pham P.K."/>
            <person name="Rizzo M."/>
            <person name="Rooney T."/>
            <person name="Rowley D."/>
            <person name="Sakano H."/>
            <person name="Salzberg S.L."/>
            <person name="Schwartz J.R."/>
            <person name="Shinn P."/>
            <person name="Southwick A.M."/>
            <person name="Sun H."/>
            <person name="Tallon L.J."/>
            <person name="Tambunga G."/>
            <person name="Toriumi M.J."/>
            <person name="Town C.D."/>
            <person name="Utterback T."/>
            <person name="Van Aken S."/>
            <person name="Vaysberg M."/>
            <person name="Vysotskaia V.S."/>
            <person name="Walker M."/>
            <person name="Wu D."/>
            <person name="Yu G."/>
            <person name="Fraser C.M."/>
            <person name="Venter J.C."/>
            <person name="Davis R.W."/>
        </authorList>
    </citation>
    <scope>NUCLEOTIDE SEQUENCE [LARGE SCALE GENOMIC DNA]</scope>
    <source>
        <strain>cv. Columbia</strain>
    </source>
</reference>
<reference key="2">
    <citation type="journal article" date="2017" name="Plant J.">
        <title>Araport11: a complete reannotation of the Arabidopsis thaliana reference genome.</title>
        <authorList>
            <person name="Cheng C.Y."/>
            <person name="Krishnakumar V."/>
            <person name="Chan A.P."/>
            <person name="Thibaud-Nissen F."/>
            <person name="Schobel S."/>
            <person name="Town C.D."/>
        </authorList>
    </citation>
    <scope>GENOME REANNOTATION</scope>
    <source>
        <strain>cv. Columbia</strain>
    </source>
</reference>